<comment type="catalytic activity">
    <reaction>
        <text>2 pyruvate + H(+) = (2S)-2-acetolactate + CO2</text>
        <dbReference type="Rhea" id="RHEA:25249"/>
        <dbReference type="ChEBI" id="CHEBI:15361"/>
        <dbReference type="ChEBI" id="CHEBI:15378"/>
        <dbReference type="ChEBI" id="CHEBI:16526"/>
        <dbReference type="ChEBI" id="CHEBI:58476"/>
        <dbReference type="EC" id="2.2.1.6"/>
    </reaction>
</comment>
<comment type="cofactor">
    <cofactor evidence="1">
        <name>Mg(2+)</name>
        <dbReference type="ChEBI" id="CHEBI:18420"/>
    </cofactor>
    <text evidence="1">Binds 1 Mg(2+) ion per subunit.</text>
</comment>
<comment type="cofactor">
    <cofactor evidence="1">
        <name>thiamine diphosphate</name>
        <dbReference type="ChEBI" id="CHEBI:58937"/>
    </cofactor>
    <text evidence="1">Binds 1 thiamine pyrophosphate per subunit.</text>
</comment>
<comment type="pathway">
    <text>Amino-acid biosynthesis; L-isoleucine biosynthesis; L-isoleucine from 2-oxobutanoate: step 1/4.</text>
</comment>
<comment type="pathway">
    <text>Amino-acid biosynthesis; L-valine biosynthesis; L-valine from pyruvate: step 1/4.</text>
</comment>
<comment type="subcellular location">
    <subcellularLocation>
        <location>Plastid</location>
        <location>Chloroplast</location>
    </subcellularLocation>
</comment>
<comment type="miscellaneous">
    <text>There are two distinct ALS genes in tobacco. The enzyme shown here is derived from the ALS gene on locus SuRB.</text>
</comment>
<comment type="miscellaneous">
    <text>Acetolactate synthase is the target enzyme for sulfonylurea and imidazolinone herbicides.</text>
</comment>
<comment type="similarity">
    <text evidence="4">Belongs to the TPP enzyme family.</text>
</comment>
<feature type="transit peptide" description="Chloroplast">
    <location>
        <begin position="1"/>
        <end position="91"/>
    </location>
</feature>
<feature type="chain" id="PRO_0000035660" description="Acetolactate synthase 2, chloroplastic">
    <location>
        <begin position="92"/>
        <end position="664"/>
    </location>
</feature>
<feature type="region of interest" description="Disordered" evidence="2">
    <location>
        <begin position="1"/>
        <end position="51"/>
    </location>
</feature>
<feature type="region of interest" description="Thiamine pyrophosphate binding">
    <location>
        <begin position="481"/>
        <end position="561"/>
    </location>
</feature>
<feature type="compositionally biased region" description="Low complexity" evidence="2">
    <location>
        <begin position="1"/>
        <end position="34"/>
    </location>
</feature>
<feature type="binding site" evidence="1">
    <location>
        <position position="138"/>
    </location>
    <ligand>
        <name>thiamine diphosphate</name>
        <dbReference type="ChEBI" id="CHEBI:58937"/>
    </ligand>
</feature>
<feature type="binding site" evidence="1">
    <location>
        <position position="240"/>
    </location>
    <ligand>
        <name>FAD</name>
        <dbReference type="ChEBI" id="CHEBI:57692"/>
    </ligand>
</feature>
<feature type="binding site" evidence="1">
    <location>
        <begin position="346"/>
        <end position="367"/>
    </location>
    <ligand>
        <name>FAD</name>
        <dbReference type="ChEBI" id="CHEBI:57692"/>
    </ligand>
</feature>
<feature type="binding site" evidence="1">
    <location>
        <begin position="389"/>
        <end position="408"/>
    </location>
    <ligand>
        <name>FAD</name>
        <dbReference type="ChEBI" id="CHEBI:57692"/>
    </ligand>
</feature>
<feature type="binding site" evidence="1">
    <location>
        <position position="532"/>
    </location>
    <ligand>
        <name>Mg(2+)</name>
        <dbReference type="ChEBI" id="CHEBI:18420"/>
    </ligand>
</feature>
<feature type="binding site" evidence="1">
    <location>
        <position position="559"/>
    </location>
    <ligand>
        <name>Mg(2+)</name>
        <dbReference type="ChEBI" id="CHEBI:18420"/>
    </ligand>
</feature>
<feature type="disulfide bond" evidence="1">
    <location>
        <begin position="158"/>
        <end position="304"/>
    </location>
</feature>
<feature type="mutagenesis site" description="In S4-Hra; highly resistant to sulfonylurea herbicides; when associated with L-568." evidence="3">
    <original>P</original>
    <variation>A</variation>
    <location>
        <position position="191"/>
    </location>
</feature>
<feature type="mutagenesis site" description="In S4-Hra; highly resistant to sulfonylurea herbicides; when associated with A-191." evidence="3">
    <original>W</original>
    <variation>L</variation>
    <location>
        <position position="568"/>
    </location>
</feature>
<evidence type="ECO:0000250" key="1"/>
<evidence type="ECO:0000256" key="2">
    <source>
        <dbReference type="SAM" id="MobiDB-lite"/>
    </source>
</evidence>
<evidence type="ECO:0000269" key="3">
    <source>
    </source>
</evidence>
<evidence type="ECO:0000305" key="4"/>
<gene>
    <name type="primary">ALS SURB</name>
</gene>
<proteinExistence type="evidence at protein level"/>
<organism>
    <name type="scientific">Nicotiana tabacum</name>
    <name type="common">Common tobacco</name>
    <dbReference type="NCBI Taxonomy" id="4097"/>
    <lineage>
        <taxon>Eukaryota</taxon>
        <taxon>Viridiplantae</taxon>
        <taxon>Streptophyta</taxon>
        <taxon>Embryophyta</taxon>
        <taxon>Tracheophyta</taxon>
        <taxon>Spermatophyta</taxon>
        <taxon>Magnoliopsida</taxon>
        <taxon>eudicotyledons</taxon>
        <taxon>Gunneridae</taxon>
        <taxon>Pentapetalae</taxon>
        <taxon>asterids</taxon>
        <taxon>lamiids</taxon>
        <taxon>Solanales</taxon>
        <taxon>Solanaceae</taxon>
        <taxon>Nicotianoideae</taxon>
        <taxon>Nicotianeae</taxon>
        <taxon>Nicotiana</taxon>
    </lineage>
</organism>
<sequence>MAAAAAAPSPSFSKTLSSSSSKSSTLLPRSTFPFPHHPHKTTPPPLHLTPTHIHSQRRRFTISNVISTTQKVSETQKAETFVSRFAPDEPRKGSDVLVEALEREGVTDVFAYPGGASMEIHQALTRSSIIRNVLPRHEQGGVFAAEGYARATGFPGVCIATSGPGATNLVSGLADALLDSVPIVAITGQVPRRMIGTDAFQETPIVEVTRSITKHNYLVMDVEDIPRVVREAFFLARSGRPGPVLIDVPKDIQQQLVIPDWDQPMRLPGYMSRLPKLPNEMLLEQIVRLISESKKPVLYVGGGCSQSSEELRRFVELTGIPVASTLMGLGAFPTGDELSLSMLGMHGTVYANYAVDSSDLLLAFGVRFDDRVTGKLEAFASRAKIVHIDIDSAEIGKNKQPHVSICADIKLALQGLNSILESKEGKLKLDFSAWRQELTVQKVKYPLNFKTFGDAIPPQYAIQVLDELTNGSAIISTGVGQHQMWAAQYYKYRKPRQWLTSGGLGAMGFGLPAAIGAAVGRPDEVVVDIDGDGSFIMNVQELATIKVENLPVKIMLLNNQHLGMVVQWEDRFYKANRAHTYLGNPSNEAEIFPNMLKFAEACGVPAARVTHRDDLRAAIQKMLDTPGPYLLDVIVPHQEHVLPMIPSGGAFKDVITEGDGRSSY</sequence>
<reference key="1">
    <citation type="journal article" date="1988" name="EMBO J.">
        <title>The molecular basis of sulfonylurea herbicide resistance in tobacco.</title>
        <authorList>
            <person name="Lee K.Y."/>
            <person name="Townsend J."/>
            <person name="Tepperman J."/>
            <person name="Black M."/>
            <person name="Chui C.-F."/>
            <person name="Mazur B."/>
            <person name="Dunsmuir P."/>
            <person name="Bedbrook J."/>
        </authorList>
    </citation>
    <scope>NUCLEOTIDE SEQUENCE [GENOMIC DNA]</scope>
    <scope>MUTAGENESIS OF PRO-191 AND TRP-568</scope>
</reference>
<reference key="2">
    <citation type="submission" date="1988-08" db="EMBL/GenBank/DDBJ databases">
        <authorList>
            <person name="Lee K.Y."/>
        </authorList>
    </citation>
    <scope>SEQUENCE REVISION</scope>
</reference>
<accession>P09114</accession>
<keyword id="KW-0028">Amino-acid biosynthesis</keyword>
<keyword id="KW-0100">Branched-chain amino acid biosynthesis</keyword>
<keyword id="KW-0150">Chloroplast</keyword>
<keyword id="KW-1015">Disulfide bond</keyword>
<keyword id="KW-0274">FAD</keyword>
<keyword id="KW-0285">Flavoprotein</keyword>
<keyword id="KW-0359">Herbicide resistance</keyword>
<keyword id="KW-0460">Magnesium</keyword>
<keyword id="KW-0479">Metal-binding</keyword>
<keyword id="KW-0934">Plastid</keyword>
<keyword id="KW-1185">Reference proteome</keyword>
<keyword id="KW-0786">Thiamine pyrophosphate</keyword>
<keyword id="KW-0808">Transferase</keyword>
<keyword id="KW-0809">Transit peptide</keyword>
<name>ILVB2_TOBAC</name>
<protein>
    <recommendedName>
        <fullName>Acetolactate synthase 2, chloroplastic</fullName>
        <ecNumber>2.2.1.6</ecNumber>
    </recommendedName>
    <alternativeName>
        <fullName>ALS II</fullName>
    </alternativeName>
    <alternativeName>
        <fullName>Acetohydroxy-acid synthase II</fullName>
    </alternativeName>
    <alternativeName>
        <fullName>Acetolactate synthase II</fullName>
    </alternativeName>
</protein>
<dbReference type="EC" id="2.2.1.6"/>
<dbReference type="EMBL" id="X07645">
    <property type="protein sequence ID" value="CAA30485.1"/>
    <property type="molecule type" value="Genomic_DNA"/>
</dbReference>
<dbReference type="PIR" id="S00546">
    <property type="entry name" value="YCNT2"/>
</dbReference>
<dbReference type="SMR" id="P09114"/>
<dbReference type="STRING" id="4097.P09114"/>
<dbReference type="BindingDB" id="P09114"/>
<dbReference type="PaxDb" id="4097-P09114"/>
<dbReference type="SABIO-RK" id="P09114"/>
<dbReference type="UniPathway" id="UPA00047">
    <property type="reaction ID" value="UER00055"/>
</dbReference>
<dbReference type="UniPathway" id="UPA00049">
    <property type="reaction ID" value="UER00059"/>
</dbReference>
<dbReference type="Proteomes" id="UP000084051">
    <property type="component" value="Unplaced"/>
</dbReference>
<dbReference type="GO" id="GO:0009507">
    <property type="term" value="C:chloroplast"/>
    <property type="evidence" value="ECO:0007669"/>
    <property type="project" value="UniProtKB-SubCell"/>
</dbReference>
<dbReference type="GO" id="GO:0003984">
    <property type="term" value="F:acetolactate synthase activity"/>
    <property type="evidence" value="ECO:0007669"/>
    <property type="project" value="UniProtKB-EC"/>
</dbReference>
<dbReference type="GO" id="GO:0050660">
    <property type="term" value="F:flavin adenine dinucleotide binding"/>
    <property type="evidence" value="ECO:0007669"/>
    <property type="project" value="InterPro"/>
</dbReference>
<dbReference type="GO" id="GO:0000287">
    <property type="term" value="F:magnesium ion binding"/>
    <property type="evidence" value="ECO:0007669"/>
    <property type="project" value="InterPro"/>
</dbReference>
<dbReference type="GO" id="GO:0030976">
    <property type="term" value="F:thiamine pyrophosphate binding"/>
    <property type="evidence" value="ECO:0007669"/>
    <property type="project" value="InterPro"/>
</dbReference>
<dbReference type="GO" id="GO:0009097">
    <property type="term" value="P:isoleucine biosynthetic process"/>
    <property type="evidence" value="ECO:0007669"/>
    <property type="project" value="UniProtKB-UniPathway"/>
</dbReference>
<dbReference type="GO" id="GO:0009099">
    <property type="term" value="P:L-valine biosynthetic process"/>
    <property type="evidence" value="ECO:0007669"/>
    <property type="project" value="UniProtKB-UniPathway"/>
</dbReference>
<dbReference type="GO" id="GO:0009635">
    <property type="term" value="P:response to herbicide"/>
    <property type="evidence" value="ECO:0007669"/>
    <property type="project" value="UniProtKB-KW"/>
</dbReference>
<dbReference type="CDD" id="cd02015">
    <property type="entry name" value="TPP_AHAS"/>
    <property type="match status" value="1"/>
</dbReference>
<dbReference type="CDD" id="cd07035">
    <property type="entry name" value="TPP_PYR_POX_like"/>
    <property type="match status" value="1"/>
</dbReference>
<dbReference type="FunFam" id="3.40.50.1220:FF:000008">
    <property type="entry name" value="Acetolactate synthase"/>
    <property type="match status" value="1"/>
</dbReference>
<dbReference type="FunFam" id="3.40.50.970:FF:000007">
    <property type="entry name" value="Acetolactate synthase"/>
    <property type="match status" value="1"/>
</dbReference>
<dbReference type="FunFam" id="3.40.50.970:FF:000053">
    <property type="entry name" value="Acetolactate synthase, mitochondrial"/>
    <property type="match status" value="1"/>
</dbReference>
<dbReference type="Gene3D" id="3.40.50.970">
    <property type="match status" value="2"/>
</dbReference>
<dbReference type="Gene3D" id="3.40.50.1220">
    <property type="entry name" value="TPP-binding domain"/>
    <property type="match status" value="1"/>
</dbReference>
<dbReference type="InterPro" id="IPR012846">
    <property type="entry name" value="Acetolactate_synth_lsu"/>
</dbReference>
<dbReference type="InterPro" id="IPR039368">
    <property type="entry name" value="AHAS_TPP"/>
</dbReference>
<dbReference type="InterPro" id="IPR029035">
    <property type="entry name" value="DHS-like_NAD/FAD-binding_dom"/>
</dbReference>
<dbReference type="InterPro" id="IPR029061">
    <property type="entry name" value="THDP-binding"/>
</dbReference>
<dbReference type="InterPro" id="IPR012000">
    <property type="entry name" value="Thiamin_PyroP_enz_cen_dom"/>
</dbReference>
<dbReference type="InterPro" id="IPR012001">
    <property type="entry name" value="Thiamin_PyroP_enz_TPP-bd_dom"/>
</dbReference>
<dbReference type="InterPro" id="IPR000399">
    <property type="entry name" value="TPP-bd_CS"/>
</dbReference>
<dbReference type="InterPro" id="IPR045229">
    <property type="entry name" value="TPP_enz"/>
</dbReference>
<dbReference type="InterPro" id="IPR011766">
    <property type="entry name" value="TPP_enzyme_TPP-bd"/>
</dbReference>
<dbReference type="NCBIfam" id="TIGR00118">
    <property type="entry name" value="acolac_lg"/>
    <property type="match status" value="1"/>
</dbReference>
<dbReference type="PANTHER" id="PTHR18968:SF13">
    <property type="entry name" value="ACETOLACTATE SYNTHASE CATALYTIC SUBUNIT, MITOCHONDRIAL"/>
    <property type="match status" value="1"/>
</dbReference>
<dbReference type="PANTHER" id="PTHR18968">
    <property type="entry name" value="THIAMINE PYROPHOSPHATE ENZYMES"/>
    <property type="match status" value="1"/>
</dbReference>
<dbReference type="Pfam" id="PF02775">
    <property type="entry name" value="TPP_enzyme_C"/>
    <property type="match status" value="1"/>
</dbReference>
<dbReference type="Pfam" id="PF00205">
    <property type="entry name" value="TPP_enzyme_M"/>
    <property type="match status" value="1"/>
</dbReference>
<dbReference type="Pfam" id="PF02776">
    <property type="entry name" value="TPP_enzyme_N"/>
    <property type="match status" value="1"/>
</dbReference>
<dbReference type="SUPFAM" id="SSF52467">
    <property type="entry name" value="DHS-like NAD/FAD-binding domain"/>
    <property type="match status" value="1"/>
</dbReference>
<dbReference type="SUPFAM" id="SSF52518">
    <property type="entry name" value="Thiamin diphosphate-binding fold (THDP-binding)"/>
    <property type="match status" value="2"/>
</dbReference>
<dbReference type="PROSITE" id="PS00187">
    <property type="entry name" value="TPP_ENZYMES"/>
    <property type="match status" value="1"/>
</dbReference>